<sequence length="361" mass="36867">MALTLEALAARFGGEIVGDGRCEVRALAPLDQAGPRQLAFLANPKYLAQVETTGAGAVLIAPGDLEKLGAAAHGRNFIVTPNPYAYFARVAQMFIDLAAPPRAAGVHPSATIDPAAQVAASAVIGPHVTVEAGAVIGERAQLDANVFVGRGTRIGDDSHLYPNVAIYHGCTLGPRAIVHSGAVIGSDGFGFAPDFVGEGDARTGAWVKIPQVGGVKVGPDVEIGANTTIDRGAMADTVIDECVKIDNLVQIGHNCRIGAYTVIAGCAGIAGSTTIGKHCMIGGAVGIAGHVTLGDYVIVTAKSGVSKSLPKAGIYTSAFPAVEHGDWNRSAALVRNLDKLRDRIKALETALAAREGDAGGA</sequence>
<gene>
    <name evidence="1" type="primary">lpxD</name>
    <name type="ordered locus">BURPS1710b_2572</name>
</gene>
<organism>
    <name type="scientific">Burkholderia pseudomallei (strain 1710b)</name>
    <dbReference type="NCBI Taxonomy" id="320372"/>
    <lineage>
        <taxon>Bacteria</taxon>
        <taxon>Pseudomonadati</taxon>
        <taxon>Pseudomonadota</taxon>
        <taxon>Betaproteobacteria</taxon>
        <taxon>Burkholderiales</taxon>
        <taxon>Burkholderiaceae</taxon>
        <taxon>Burkholderia</taxon>
        <taxon>pseudomallei group</taxon>
    </lineage>
</organism>
<proteinExistence type="inferred from homology"/>
<keyword id="KW-0012">Acyltransferase</keyword>
<keyword id="KW-0441">Lipid A biosynthesis</keyword>
<keyword id="KW-0444">Lipid biosynthesis</keyword>
<keyword id="KW-0443">Lipid metabolism</keyword>
<keyword id="KW-0677">Repeat</keyword>
<keyword id="KW-0808">Transferase</keyword>
<feature type="chain" id="PRO_0000264351" description="UDP-3-O-acylglucosamine N-acyltransferase">
    <location>
        <begin position="1"/>
        <end position="361"/>
    </location>
</feature>
<feature type="active site" description="Proton acceptor" evidence="1">
    <location>
        <position position="253"/>
    </location>
</feature>
<comment type="function">
    <text evidence="1">Catalyzes the N-acylation of UDP-3-O-acylglucosamine using 3-hydroxyacyl-ACP as the acyl donor. Is involved in the biosynthesis of lipid A, a phosphorylated glycolipid that anchors the lipopolysaccharide to the outer membrane of the cell.</text>
</comment>
<comment type="catalytic activity">
    <reaction evidence="1">
        <text>a UDP-3-O-[(3R)-3-hydroxyacyl]-alpha-D-glucosamine + a (3R)-hydroxyacyl-[ACP] = a UDP-2-N,3-O-bis[(3R)-3-hydroxyacyl]-alpha-D-glucosamine + holo-[ACP] + H(+)</text>
        <dbReference type="Rhea" id="RHEA:53836"/>
        <dbReference type="Rhea" id="RHEA-COMP:9685"/>
        <dbReference type="Rhea" id="RHEA-COMP:9945"/>
        <dbReference type="ChEBI" id="CHEBI:15378"/>
        <dbReference type="ChEBI" id="CHEBI:64479"/>
        <dbReference type="ChEBI" id="CHEBI:78827"/>
        <dbReference type="ChEBI" id="CHEBI:137740"/>
        <dbReference type="ChEBI" id="CHEBI:137748"/>
        <dbReference type="EC" id="2.3.1.191"/>
    </reaction>
</comment>
<comment type="pathway">
    <text evidence="1">Bacterial outer membrane biogenesis; LPS lipid A biosynthesis.</text>
</comment>
<comment type="subunit">
    <text evidence="1">Homotrimer.</text>
</comment>
<comment type="similarity">
    <text evidence="1">Belongs to the transferase hexapeptide repeat family. LpxD subfamily.</text>
</comment>
<dbReference type="EC" id="2.3.1.191" evidence="1"/>
<dbReference type="EMBL" id="CP000124">
    <property type="protein sequence ID" value="ABA48354.1"/>
    <property type="molecule type" value="Genomic_DNA"/>
</dbReference>
<dbReference type="RefSeq" id="WP_004527288.1">
    <property type="nucleotide sequence ID" value="NC_007434.1"/>
</dbReference>
<dbReference type="SMR" id="Q3JR39"/>
<dbReference type="EnsemblBacteria" id="ABA48354">
    <property type="protein sequence ID" value="ABA48354"/>
    <property type="gene ID" value="BURPS1710b_2572"/>
</dbReference>
<dbReference type="KEGG" id="bpm:BURPS1710b_2572"/>
<dbReference type="HOGENOM" id="CLU_049865_0_1_4"/>
<dbReference type="UniPathway" id="UPA00973"/>
<dbReference type="Proteomes" id="UP000002700">
    <property type="component" value="Chromosome I"/>
</dbReference>
<dbReference type="GO" id="GO:0016020">
    <property type="term" value="C:membrane"/>
    <property type="evidence" value="ECO:0007669"/>
    <property type="project" value="GOC"/>
</dbReference>
<dbReference type="GO" id="GO:0016410">
    <property type="term" value="F:N-acyltransferase activity"/>
    <property type="evidence" value="ECO:0007669"/>
    <property type="project" value="InterPro"/>
</dbReference>
<dbReference type="GO" id="GO:0009245">
    <property type="term" value="P:lipid A biosynthetic process"/>
    <property type="evidence" value="ECO:0007669"/>
    <property type="project" value="UniProtKB-UniRule"/>
</dbReference>
<dbReference type="CDD" id="cd03352">
    <property type="entry name" value="LbH_LpxD"/>
    <property type="match status" value="1"/>
</dbReference>
<dbReference type="Gene3D" id="1.20.5.170">
    <property type="match status" value="1"/>
</dbReference>
<dbReference type="Gene3D" id="2.160.10.10">
    <property type="entry name" value="Hexapeptide repeat proteins"/>
    <property type="match status" value="1"/>
</dbReference>
<dbReference type="Gene3D" id="3.40.1390.10">
    <property type="entry name" value="MurE/MurF, N-terminal domain"/>
    <property type="match status" value="1"/>
</dbReference>
<dbReference type="HAMAP" id="MF_00523">
    <property type="entry name" value="LpxD"/>
    <property type="match status" value="1"/>
</dbReference>
<dbReference type="InterPro" id="IPR001451">
    <property type="entry name" value="Hexapep"/>
</dbReference>
<dbReference type="InterPro" id="IPR018357">
    <property type="entry name" value="Hexapep_transf_CS"/>
</dbReference>
<dbReference type="InterPro" id="IPR007691">
    <property type="entry name" value="LpxD"/>
</dbReference>
<dbReference type="InterPro" id="IPR011004">
    <property type="entry name" value="Trimer_LpxA-like_sf"/>
</dbReference>
<dbReference type="InterPro" id="IPR020573">
    <property type="entry name" value="UDP_GlcNAc_AcTrfase_non-rep"/>
</dbReference>
<dbReference type="NCBIfam" id="TIGR01853">
    <property type="entry name" value="lipid_A_lpxD"/>
    <property type="match status" value="1"/>
</dbReference>
<dbReference type="NCBIfam" id="NF002060">
    <property type="entry name" value="PRK00892.1"/>
    <property type="match status" value="1"/>
</dbReference>
<dbReference type="PANTHER" id="PTHR43378">
    <property type="entry name" value="UDP-3-O-ACYLGLUCOSAMINE N-ACYLTRANSFERASE"/>
    <property type="match status" value="1"/>
</dbReference>
<dbReference type="PANTHER" id="PTHR43378:SF2">
    <property type="entry name" value="UDP-3-O-ACYLGLUCOSAMINE N-ACYLTRANSFERASE 1, MITOCHONDRIAL-RELATED"/>
    <property type="match status" value="1"/>
</dbReference>
<dbReference type="Pfam" id="PF00132">
    <property type="entry name" value="Hexapep"/>
    <property type="match status" value="2"/>
</dbReference>
<dbReference type="Pfam" id="PF14602">
    <property type="entry name" value="Hexapep_2"/>
    <property type="match status" value="1"/>
</dbReference>
<dbReference type="Pfam" id="PF04613">
    <property type="entry name" value="LpxD"/>
    <property type="match status" value="1"/>
</dbReference>
<dbReference type="SUPFAM" id="SSF51161">
    <property type="entry name" value="Trimeric LpxA-like enzymes"/>
    <property type="match status" value="1"/>
</dbReference>
<dbReference type="PROSITE" id="PS00101">
    <property type="entry name" value="HEXAPEP_TRANSFERASES"/>
    <property type="match status" value="3"/>
</dbReference>
<reference key="1">
    <citation type="journal article" date="2010" name="Genome Biol. Evol.">
        <title>Continuing evolution of Burkholderia mallei through genome reduction and large-scale rearrangements.</title>
        <authorList>
            <person name="Losada L."/>
            <person name="Ronning C.M."/>
            <person name="DeShazer D."/>
            <person name="Woods D."/>
            <person name="Fedorova N."/>
            <person name="Kim H.S."/>
            <person name="Shabalina S.A."/>
            <person name="Pearson T.R."/>
            <person name="Brinkac L."/>
            <person name="Tan P."/>
            <person name="Nandi T."/>
            <person name="Crabtree J."/>
            <person name="Badger J."/>
            <person name="Beckstrom-Sternberg S."/>
            <person name="Saqib M."/>
            <person name="Schutzer S.E."/>
            <person name="Keim P."/>
            <person name="Nierman W.C."/>
        </authorList>
    </citation>
    <scope>NUCLEOTIDE SEQUENCE [LARGE SCALE GENOMIC DNA]</scope>
    <source>
        <strain>1710b</strain>
    </source>
</reference>
<name>LPXD_BURP1</name>
<evidence type="ECO:0000255" key="1">
    <source>
        <dbReference type="HAMAP-Rule" id="MF_00523"/>
    </source>
</evidence>
<protein>
    <recommendedName>
        <fullName evidence="1">UDP-3-O-acylglucosamine N-acyltransferase</fullName>
        <ecNumber evidence="1">2.3.1.191</ecNumber>
    </recommendedName>
</protein>
<accession>Q3JR39</accession>